<evidence type="ECO:0000255" key="1">
    <source>
        <dbReference type="HAMAP-Rule" id="MF_00604"/>
    </source>
</evidence>
<feature type="chain" id="PRO_1000006431" description="Protein translation factor SUI1 homolog">
    <location>
        <begin position="1"/>
        <end position="102"/>
    </location>
</feature>
<accession>Q46F27</accession>
<reference key="1">
    <citation type="journal article" date="2006" name="J. Bacteriol.">
        <title>The Methanosarcina barkeri genome: comparative analysis with Methanosarcina acetivorans and Methanosarcina mazei reveals extensive rearrangement within methanosarcinal genomes.</title>
        <authorList>
            <person name="Maeder D.L."/>
            <person name="Anderson I."/>
            <person name="Brettin T.S."/>
            <person name="Bruce D.C."/>
            <person name="Gilna P."/>
            <person name="Han C.S."/>
            <person name="Lapidus A."/>
            <person name="Metcalf W.W."/>
            <person name="Saunders E."/>
            <person name="Tapia R."/>
            <person name="Sowers K.R."/>
        </authorList>
    </citation>
    <scope>NUCLEOTIDE SEQUENCE [LARGE SCALE GENOMIC DNA]</scope>
    <source>
        <strain>Fusaro / DSM 804</strain>
    </source>
</reference>
<comment type="similarity">
    <text evidence="1">Belongs to the SUI1 family.</text>
</comment>
<name>SUI1_METBF</name>
<dbReference type="EMBL" id="CP000099">
    <property type="protein sequence ID" value="AAZ69515.1"/>
    <property type="molecule type" value="Genomic_DNA"/>
</dbReference>
<dbReference type="SMR" id="Q46F27"/>
<dbReference type="STRING" id="269797.Mbar_A0534"/>
<dbReference type="PaxDb" id="269797-Mbar_A0534"/>
<dbReference type="KEGG" id="mba:Mbar_A0534"/>
<dbReference type="eggNOG" id="arCOG04223">
    <property type="taxonomic scope" value="Archaea"/>
</dbReference>
<dbReference type="HOGENOM" id="CLU_082805_6_1_2"/>
<dbReference type="OrthoDB" id="11182at2157"/>
<dbReference type="GO" id="GO:0003729">
    <property type="term" value="F:mRNA binding"/>
    <property type="evidence" value="ECO:0007669"/>
    <property type="project" value="TreeGrafter"/>
</dbReference>
<dbReference type="GO" id="GO:0003743">
    <property type="term" value="F:translation initiation factor activity"/>
    <property type="evidence" value="ECO:0007669"/>
    <property type="project" value="InterPro"/>
</dbReference>
<dbReference type="GO" id="GO:0001731">
    <property type="term" value="P:formation of translation preinitiation complex"/>
    <property type="evidence" value="ECO:0007669"/>
    <property type="project" value="TreeGrafter"/>
</dbReference>
<dbReference type="GO" id="GO:0006417">
    <property type="term" value="P:regulation of translation"/>
    <property type="evidence" value="ECO:0007669"/>
    <property type="project" value="UniProtKB-UniRule"/>
</dbReference>
<dbReference type="GO" id="GO:0002188">
    <property type="term" value="P:translation reinitiation"/>
    <property type="evidence" value="ECO:0007669"/>
    <property type="project" value="TreeGrafter"/>
</dbReference>
<dbReference type="CDD" id="cd11567">
    <property type="entry name" value="YciH_like"/>
    <property type="match status" value="1"/>
</dbReference>
<dbReference type="FunFam" id="3.30.780.10:FF:000006">
    <property type="entry name" value="Protein translation factor SUI1 homolog"/>
    <property type="match status" value="1"/>
</dbReference>
<dbReference type="Gene3D" id="3.30.780.10">
    <property type="entry name" value="SUI1-like domain"/>
    <property type="match status" value="1"/>
</dbReference>
<dbReference type="HAMAP" id="MF_00604">
    <property type="entry name" value="SUI1"/>
    <property type="match status" value="1"/>
</dbReference>
<dbReference type="InterPro" id="IPR050318">
    <property type="entry name" value="DENR/SUI1_TIF"/>
</dbReference>
<dbReference type="InterPro" id="IPR001950">
    <property type="entry name" value="SUI1"/>
</dbReference>
<dbReference type="InterPro" id="IPR022851">
    <property type="entry name" value="SUI1_arc"/>
</dbReference>
<dbReference type="InterPro" id="IPR005872">
    <property type="entry name" value="SUI1_arc_bac"/>
</dbReference>
<dbReference type="InterPro" id="IPR036877">
    <property type="entry name" value="SUI1_dom_sf"/>
</dbReference>
<dbReference type="NCBIfam" id="NF002096">
    <property type="entry name" value="PRK00939.1"/>
    <property type="match status" value="1"/>
</dbReference>
<dbReference type="NCBIfam" id="TIGR01158">
    <property type="entry name" value="SUI1_rel"/>
    <property type="match status" value="1"/>
</dbReference>
<dbReference type="PANTHER" id="PTHR12789:SF0">
    <property type="entry name" value="DENSITY-REGULATED PROTEIN"/>
    <property type="match status" value="1"/>
</dbReference>
<dbReference type="PANTHER" id="PTHR12789">
    <property type="entry name" value="DENSITY-REGULATED PROTEIN HOMOLOG"/>
    <property type="match status" value="1"/>
</dbReference>
<dbReference type="Pfam" id="PF01253">
    <property type="entry name" value="SUI1"/>
    <property type="match status" value="1"/>
</dbReference>
<dbReference type="PIRSF" id="PIRSF037511">
    <property type="entry name" value="Transl_init_SUI1_pro"/>
    <property type="match status" value="1"/>
</dbReference>
<dbReference type="SUPFAM" id="SSF55159">
    <property type="entry name" value="eIF1-like"/>
    <property type="match status" value="1"/>
</dbReference>
<dbReference type="PROSITE" id="PS50296">
    <property type="entry name" value="SUI1"/>
    <property type="match status" value="1"/>
</dbReference>
<gene>
    <name type="ordered locus">Mbar_A0534</name>
</gene>
<proteinExistence type="inferred from homology"/>
<protein>
    <recommendedName>
        <fullName evidence="1">Protein translation factor SUI1 homolog</fullName>
    </recommendedName>
</protein>
<keyword id="KW-0648">Protein biosynthesis</keyword>
<keyword id="KW-0810">Translation regulation</keyword>
<sequence>MSSGMCPVCGLPKELCICEEVAKEQQRITVKVNRRRYGKEVTVVEGFDASEIDLHELSTYLKSKFACGGTVKGNTVELQGNHLARMKEVLMEKGFSAEQIKN</sequence>
<organism>
    <name type="scientific">Methanosarcina barkeri (strain Fusaro / DSM 804)</name>
    <dbReference type="NCBI Taxonomy" id="269797"/>
    <lineage>
        <taxon>Archaea</taxon>
        <taxon>Methanobacteriati</taxon>
        <taxon>Methanobacteriota</taxon>
        <taxon>Stenosarchaea group</taxon>
        <taxon>Methanomicrobia</taxon>
        <taxon>Methanosarcinales</taxon>
        <taxon>Methanosarcinaceae</taxon>
        <taxon>Methanosarcina</taxon>
    </lineage>
</organism>